<feature type="chain" id="PRO_1000082305" description="Ribonuclease PH">
    <location>
        <begin position="1"/>
        <end position="237"/>
    </location>
</feature>
<feature type="binding site" evidence="1">
    <location>
        <position position="86"/>
    </location>
    <ligand>
        <name>phosphate</name>
        <dbReference type="ChEBI" id="CHEBI:43474"/>
        <note>substrate</note>
    </ligand>
</feature>
<feature type="binding site" evidence="1">
    <location>
        <begin position="124"/>
        <end position="126"/>
    </location>
    <ligand>
        <name>phosphate</name>
        <dbReference type="ChEBI" id="CHEBI:43474"/>
        <note>substrate</note>
    </ligand>
</feature>
<protein>
    <recommendedName>
        <fullName evidence="1">Ribonuclease PH</fullName>
        <shortName evidence="1">RNase PH</shortName>
        <ecNumber evidence="1">2.7.7.56</ecNumber>
    </recommendedName>
    <alternativeName>
        <fullName evidence="1">tRNA nucleotidyltransferase</fullName>
    </alternativeName>
</protein>
<proteinExistence type="inferred from homology"/>
<reference key="1">
    <citation type="submission" date="2007-10" db="EMBL/GenBank/DDBJ databases">
        <title>Complete sequence of Shewanella pealeana ATCC 700345.</title>
        <authorList>
            <consortium name="US DOE Joint Genome Institute"/>
            <person name="Copeland A."/>
            <person name="Lucas S."/>
            <person name="Lapidus A."/>
            <person name="Barry K."/>
            <person name="Glavina del Rio T."/>
            <person name="Dalin E."/>
            <person name="Tice H."/>
            <person name="Pitluck S."/>
            <person name="Chertkov O."/>
            <person name="Brettin T."/>
            <person name="Bruce D."/>
            <person name="Detter J.C."/>
            <person name="Han C."/>
            <person name="Schmutz J."/>
            <person name="Larimer F."/>
            <person name="Land M."/>
            <person name="Hauser L."/>
            <person name="Kyrpides N."/>
            <person name="Kim E."/>
            <person name="Zhao J.-S.Z."/>
            <person name="Manno D."/>
            <person name="Hawari J."/>
            <person name="Richardson P."/>
        </authorList>
    </citation>
    <scope>NUCLEOTIDE SEQUENCE [LARGE SCALE GENOMIC DNA]</scope>
    <source>
        <strain>ATCC 700345 / ANG-SQ1</strain>
    </source>
</reference>
<dbReference type="EC" id="2.7.7.56" evidence="1"/>
<dbReference type="EMBL" id="CP000851">
    <property type="protein sequence ID" value="ABV89154.1"/>
    <property type="molecule type" value="Genomic_DNA"/>
</dbReference>
<dbReference type="RefSeq" id="WP_012157036.1">
    <property type="nucleotide sequence ID" value="NC_009901.1"/>
</dbReference>
<dbReference type="SMR" id="A8H9B7"/>
<dbReference type="STRING" id="398579.Spea_3844"/>
<dbReference type="KEGG" id="spl:Spea_3844"/>
<dbReference type="eggNOG" id="COG0689">
    <property type="taxonomic scope" value="Bacteria"/>
</dbReference>
<dbReference type="HOGENOM" id="CLU_050858_0_0_6"/>
<dbReference type="OrthoDB" id="9802265at2"/>
<dbReference type="Proteomes" id="UP000002608">
    <property type="component" value="Chromosome"/>
</dbReference>
<dbReference type="GO" id="GO:0000175">
    <property type="term" value="F:3'-5'-RNA exonuclease activity"/>
    <property type="evidence" value="ECO:0007669"/>
    <property type="project" value="UniProtKB-UniRule"/>
</dbReference>
<dbReference type="GO" id="GO:0000049">
    <property type="term" value="F:tRNA binding"/>
    <property type="evidence" value="ECO:0007669"/>
    <property type="project" value="UniProtKB-UniRule"/>
</dbReference>
<dbReference type="GO" id="GO:0009022">
    <property type="term" value="F:tRNA nucleotidyltransferase activity"/>
    <property type="evidence" value="ECO:0007669"/>
    <property type="project" value="UniProtKB-UniRule"/>
</dbReference>
<dbReference type="GO" id="GO:0016075">
    <property type="term" value="P:rRNA catabolic process"/>
    <property type="evidence" value="ECO:0007669"/>
    <property type="project" value="UniProtKB-UniRule"/>
</dbReference>
<dbReference type="GO" id="GO:0006364">
    <property type="term" value="P:rRNA processing"/>
    <property type="evidence" value="ECO:0007669"/>
    <property type="project" value="UniProtKB-KW"/>
</dbReference>
<dbReference type="GO" id="GO:0008033">
    <property type="term" value="P:tRNA processing"/>
    <property type="evidence" value="ECO:0007669"/>
    <property type="project" value="UniProtKB-UniRule"/>
</dbReference>
<dbReference type="CDD" id="cd11362">
    <property type="entry name" value="RNase_PH_bact"/>
    <property type="match status" value="1"/>
</dbReference>
<dbReference type="FunFam" id="3.30.230.70:FF:000003">
    <property type="entry name" value="Ribonuclease PH"/>
    <property type="match status" value="1"/>
</dbReference>
<dbReference type="Gene3D" id="3.30.230.70">
    <property type="entry name" value="GHMP Kinase, N-terminal domain"/>
    <property type="match status" value="1"/>
</dbReference>
<dbReference type="HAMAP" id="MF_00564">
    <property type="entry name" value="RNase_PH"/>
    <property type="match status" value="1"/>
</dbReference>
<dbReference type="InterPro" id="IPR001247">
    <property type="entry name" value="ExoRNase_PH_dom1"/>
</dbReference>
<dbReference type="InterPro" id="IPR015847">
    <property type="entry name" value="ExoRNase_PH_dom2"/>
</dbReference>
<dbReference type="InterPro" id="IPR036345">
    <property type="entry name" value="ExoRNase_PH_dom2_sf"/>
</dbReference>
<dbReference type="InterPro" id="IPR027408">
    <property type="entry name" value="PNPase/RNase_PH_dom_sf"/>
</dbReference>
<dbReference type="InterPro" id="IPR020568">
    <property type="entry name" value="Ribosomal_Su5_D2-typ_SF"/>
</dbReference>
<dbReference type="InterPro" id="IPR050080">
    <property type="entry name" value="RNase_PH"/>
</dbReference>
<dbReference type="InterPro" id="IPR002381">
    <property type="entry name" value="RNase_PH_bac-type"/>
</dbReference>
<dbReference type="InterPro" id="IPR018336">
    <property type="entry name" value="RNase_PH_CS"/>
</dbReference>
<dbReference type="NCBIfam" id="TIGR01966">
    <property type="entry name" value="RNasePH"/>
    <property type="match status" value="1"/>
</dbReference>
<dbReference type="PANTHER" id="PTHR11953">
    <property type="entry name" value="EXOSOME COMPLEX COMPONENT"/>
    <property type="match status" value="1"/>
</dbReference>
<dbReference type="PANTHER" id="PTHR11953:SF0">
    <property type="entry name" value="EXOSOME COMPLEX COMPONENT RRP41"/>
    <property type="match status" value="1"/>
</dbReference>
<dbReference type="Pfam" id="PF01138">
    <property type="entry name" value="RNase_PH"/>
    <property type="match status" value="1"/>
</dbReference>
<dbReference type="Pfam" id="PF03725">
    <property type="entry name" value="RNase_PH_C"/>
    <property type="match status" value="1"/>
</dbReference>
<dbReference type="SUPFAM" id="SSF55666">
    <property type="entry name" value="Ribonuclease PH domain 2-like"/>
    <property type="match status" value="1"/>
</dbReference>
<dbReference type="SUPFAM" id="SSF54211">
    <property type="entry name" value="Ribosomal protein S5 domain 2-like"/>
    <property type="match status" value="1"/>
</dbReference>
<dbReference type="PROSITE" id="PS01277">
    <property type="entry name" value="RIBONUCLEASE_PH"/>
    <property type="match status" value="1"/>
</dbReference>
<sequence length="237" mass="25711">MRPSNRTPAQSRPVTITRQFTAHAEGSVLVEFGDTKVLCTASFEEGVPRFLKGQGQGWVTAEYGMLPRSTHSRMQREAARGKQSGRTQEIQRLIGRSLRAAVDMKLLGENTIVIDCDVIQADGGTRTAAITGACVALVDALNWARGKGILKTNPLKFLIAAVSVGIYKGEPICDLEYIEDSAAETDMNVVMTETGKIIEIQGTAEGEPFSHEELLSLLDLAKHGIREIVDIQKASLS</sequence>
<comment type="function">
    <text evidence="1">Phosphorolytic 3'-5' exoribonuclease that plays an important role in tRNA 3'-end maturation. Removes nucleotide residues following the 3'-CCA terminus of tRNAs; can also add nucleotides to the ends of RNA molecules by using nucleoside diphosphates as substrates, but this may not be physiologically important. Probably plays a role in initiation of 16S rRNA degradation (leading to ribosome degradation) during starvation.</text>
</comment>
<comment type="catalytic activity">
    <reaction evidence="1">
        <text>tRNA(n+1) + phosphate = tRNA(n) + a ribonucleoside 5'-diphosphate</text>
        <dbReference type="Rhea" id="RHEA:10628"/>
        <dbReference type="Rhea" id="RHEA-COMP:17343"/>
        <dbReference type="Rhea" id="RHEA-COMP:17344"/>
        <dbReference type="ChEBI" id="CHEBI:43474"/>
        <dbReference type="ChEBI" id="CHEBI:57930"/>
        <dbReference type="ChEBI" id="CHEBI:173114"/>
        <dbReference type="EC" id="2.7.7.56"/>
    </reaction>
</comment>
<comment type="subunit">
    <text evidence="1">Homohexameric ring arranged as a trimer of dimers.</text>
</comment>
<comment type="similarity">
    <text evidence="1">Belongs to the RNase PH family.</text>
</comment>
<keyword id="KW-0548">Nucleotidyltransferase</keyword>
<keyword id="KW-1185">Reference proteome</keyword>
<keyword id="KW-0694">RNA-binding</keyword>
<keyword id="KW-0698">rRNA processing</keyword>
<keyword id="KW-0808">Transferase</keyword>
<keyword id="KW-0819">tRNA processing</keyword>
<keyword id="KW-0820">tRNA-binding</keyword>
<name>RNPH_SHEPA</name>
<gene>
    <name evidence="1" type="primary">rph</name>
    <name type="ordered locus">Spea_3844</name>
</gene>
<evidence type="ECO:0000255" key="1">
    <source>
        <dbReference type="HAMAP-Rule" id="MF_00564"/>
    </source>
</evidence>
<accession>A8H9B7</accession>
<organism>
    <name type="scientific">Shewanella pealeana (strain ATCC 700345 / ANG-SQ1)</name>
    <dbReference type="NCBI Taxonomy" id="398579"/>
    <lineage>
        <taxon>Bacteria</taxon>
        <taxon>Pseudomonadati</taxon>
        <taxon>Pseudomonadota</taxon>
        <taxon>Gammaproteobacteria</taxon>
        <taxon>Alteromonadales</taxon>
        <taxon>Shewanellaceae</taxon>
        <taxon>Shewanella</taxon>
    </lineage>
</organism>